<reference key="1">
    <citation type="journal article" date="2002" name="Cell Tissue Res.">
        <title>Nulp1, a novel basic helix-loop-helix protein expressed broadly during early embryonic organogenesis and prominently in developing dorsal root ganglia.</title>
        <authorList>
            <person name="Olsson M."/>
            <person name="Durbeej M."/>
            <person name="Ekblom P."/>
            <person name="Hjalt T."/>
        </authorList>
    </citation>
    <scope>NUCLEOTIDE SEQUENCE [MRNA] (ISOFORM 2)</scope>
    <scope>SUBCELLULAR LOCATION</scope>
    <scope>TISSUE SPECIFICITY</scope>
    <source>
        <tissue>Embryonic kidney</tissue>
    </source>
</reference>
<reference key="2">
    <citation type="journal article" date="2005" name="Science">
        <title>The transcriptional landscape of the mammalian genome.</title>
        <authorList>
            <person name="Carninci P."/>
            <person name="Kasukawa T."/>
            <person name="Katayama S."/>
            <person name="Gough J."/>
            <person name="Frith M.C."/>
            <person name="Maeda N."/>
            <person name="Oyama R."/>
            <person name="Ravasi T."/>
            <person name="Lenhard B."/>
            <person name="Wells C."/>
            <person name="Kodzius R."/>
            <person name="Shimokawa K."/>
            <person name="Bajic V.B."/>
            <person name="Brenner S.E."/>
            <person name="Batalov S."/>
            <person name="Forrest A.R."/>
            <person name="Zavolan M."/>
            <person name="Davis M.J."/>
            <person name="Wilming L.G."/>
            <person name="Aidinis V."/>
            <person name="Allen J.E."/>
            <person name="Ambesi-Impiombato A."/>
            <person name="Apweiler R."/>
            <person name="Aturaliya R.N."/>
            <person name="Bailey T.L."/>
            <person name="Bansal M."/>
            <person name="Baxter L."/>
            <person name="Beisel K.W."/>
            <person name="Bersano T."/>
            <person name="Bono H."/>
            <person name="Chalk A.M."/>
            <person name="Chiu K.P."/>
            <person name="Choudhary V."/>
            <person name="Christoffels A."/>
            <person name="Clutterbuck D.R."/>
            <person name="Crowe M.L."/>
            <person name="Dalla E."/>
            <person name="Dalrymple B.P."/>
            <person name="de Bono B."/>
            <person name="Della Gatta G."/>
            <person name="di Bernardo D."/>
            <person name="Down T."/>
            <person name="Engstrom P."/>
            <person name="Fagiolini M."/>
            <person name="Faulkner G."/>
            <person name="Fletcher C.F."/>
            <person name="Fukushima T."/>
            <person name="Furuno M."/>
            <person name="Futaki S."/>
            <person name="Gariboldi M."/>
            <person name="Georgii-Hemming P."/>
            <person name="Gingeras T.R."/>
            <person name="Gojobori T."/>
            <person name="Green R.E."/>
            <person name="Gustincich S."/>
            <person name="Harbers M."/>
            <person name="Hayashi Y."/>
            <person name="Hensch T.K."/>
            <person name="Hirokawa N."/>
            <person name="Hill D."/>
            <person name="Huminiecki L."/>
            <person name="Iacono M."/>
            <person name="Ikeo K."/>
            <person name="Iwama A."/>
            <person name="Ishikawa T."/>
            <person name="Jakt M."/>
            <person name="Kanapin A."/>
            <person name="Katoh M."/>
            <person name="Kawasawa Y."/>
            <person name="Kelso J."/>
            <person name="Kitamura H."/>
            <person name="Kitano H."/>
            <person name="Kollias G."/>
            <person name="Krishnan S.P."/>
            <person name="Kruger A."/>
            <person name="Kummerfeld S.K."/>
            <person name="Kurochkin I.V."/>
            <person name="Lareau L.F."/>
            <person name="Lazarevic D."/>
            <person name="Lipovich L."/>
            <person name="Liu J."/>
            <person name="Liuni S."/>
            <person name="McWilliam S."/>
            <person name="Madan Babu M."/>
            <person name="Madera M."/>
            <person name="Marchionni L."/>
            <person name="Matsuda H."/>
            <person name="Matsuzawa S."/>
            <person name="Miki H."/>
            <person name="Mignone F."/>
            <person name="Miyake S."/>
            <person name="Morris K."/>
            <person name="Mottagui-Tabar S."/>
            <person name="Mulder N."/>
            <person name="Nakano N."/>
            <person name="Nakauchi H."/>
            <person name="Ng P."/>
            <person name="Nilsson R."/>
            <person name="Nishiguchi S."/>
            <person name="Nishikawa S."/>
            <person name="Nori F."/>
            <person name="Ohara O."/>
            <person name="Okazaki Y."/>
            <person name="Orlando V."/>
            <person name="Pang K.C."/>
            <person name="Pavan W.J."/>
            <person name="Pavesi G."/>
            <person name="Pesole G."/>
            <person name="Petrovsky N."/>
            <person name="Piazza S."/>
            <person name="Reed J."/>
            <person name="Reid J.F."/>
            <person name="Ring B.Z."/>
            <person name="Ringwald M."/>
            <person name="Rost B."/>
            <person name="Ruan Y."/>
            <person name="Salzberg S.L."/>
            <person name="Sandelin A."/>
            <person name="Schneider C."/>
            <person name="Schoenbach C."/>
            <person name="Sekiguchi K."/>
            <person name="Semple C.A."/>
            <person name="Seno S."/>
            <person name="Sessa L."/>
            <person name="Sheng Y."/>
            <person name="Shibata Y."/>
            <person name="Shimada H."/>
            <person name="Shimada K."/>
            <person name="Silva D."/>
            <person name="Sinclair B."/>
            <person name="Sperling S."/>
            <person name="Stupka E."/>
            <person name="Sugiura K."/>
            <person name="Sultana R."/>
            <person name="Takenaka Y."/>
            <person name="Taki K."/>
            <person name="Tammoja K."/>
            <person name="Tan S.L."/>
            <person name="Tang S."/>
            <person name="Taylor M.S."/>
            <person name="Tegner J."/>
            <person name="Teichmann S.A."/>
            <person name="Ueda H.R."/>
            <person name="van Nimwegen E."/>
            <person name="Verardo R."/>
            <person name="Wei C.L."/>
            <person name="Yagi K."/>
            <person name="Yamanishi H."/>
            <person name="Zabarovsky E."/>
            <person name="Zhu S."/>
            <person name="Zimmer A."/>
            <person name="Hide W."/>
            <person name="Bult C."/>
            <person name="Grimmond S.M."/>
            <person name="Teasdale R.D."/>
            <person name="Liu E.T."/>
            <person name="Brusic V."/>
            <person name="Quackenbush J."/>
            <person name="Wahlestedt C."/>
            <person name="Mattick J.S."/>
            <person name="Hume D.A."/>
            <person name="Kai C."/>
            <person name="Sasaki D."/>
            <person name="Tomaru Y."/>
            <person name="Fukuda S."/>
            <person name="Kanamori-Katayama M."/>
            <person name="Suzuki M."/>
            <person name="Aoki J."/>
            <person name="Arakawa T."/>
            <person name="Iida J."/>
            <person name="Imamura K."/>
            <person name="Itoh M."/>
            <person name="Kato T."/>
            <person name="Kawaji H."/>
            <person name="Kawagashira N."/>
            <person name="Kawashima T."/>
            <person name="Kojima M."/>
            <person name="Kondo S."/>
            <person name="Konno H."/>
            <person name="Nakano K."/>
            <person name="Ninomiya N."/>
            <person name="Nishio T."/>
            <person name="Okada M."/>
            <person name="Plessy C."/>
            <person name="Shibata K."/>
            <person name="Shiraki T."/>
            <person name="Suzuki S."/>
            <person name="Tagami M."/>
            <person name="Waki K."/>
            <person name="Watahiki A."/>
            <person name="Okamura-Oho Y."/>
            <person name="Suzuki H."/>
            <person name="Kawai J."/>
            <person name="Hayashizaki Y."/>
        </authorList>
    </citation>
    <scope>NUCLEOTIDE SEQUENCE [LARGE SCALE MRNA] (ISOFORMS 1; 3; 4 AND 5)</scope>
    <scope>NUCLEOTIDE SEQUENCE [LARGE SCALE MRNA] OF 51-676 (ISOFORM 2)</scope>
    <source>
        <strain>BALB/cJ</strain>
        <strain>C57BL/6J</strain>
        <strain>NOD</strain>
        <tissue>Bone marrow</tissue>
        <tissue>Corpora quadrigemina</tissue>
        <tissue>Melanoma</tissue>
        <tissue>Spleen</tissue>
        <tissue>Thymus</tissue>
    </source>
</reference>
<reference key="3">
    <citation type="journal article" date="2004" name="Genome Res.">
        <title>The status, quality, and expansion of the NIH full-length cDNA project: the Mammalian Gene Collection (MGC).</title>
        <authorList>
            <consortium name="The MGC Project Team"/>
        </authorList>
    </citation>
    <scope>NUCLEOTIDE SEQUENCE [LARGE SCALE MRNA] (ISOFORMS 1 AND 2)</scope>
    <source>
        <strain>C57BL/6J</strain>
        <strain>FVB/N</strain>
        <tissue>Brain</tissue>
        <tissue>Mammary gland</tissue>
    </source>
</reference>
<reference key="4">
    <citation type="journal article" date="2006" name="Mol. Cell. Proteomics">
        <title>Comprehensive identification of phosphorylation sites in postsynaptic density preparations.</title>
        <authorList>
            <person name="Trinidad J.C."/>
            <person name="Specht C.G."/>
            <person name="Thalhammer A."/>
            <person name="Schoepfer R."/>
            <person name="Burlingame A.L."/>
        </authorList>
    </citation>
    <scope>IDENTIFICATION BY MASS SPECTROMETRY [LARGE SCALE ANALYSIS]</scope>
    <source>
        <tissue>Brain</tissue>
    </source>
</reference>
<reference key="5">
    <citation type="journal article" date="2008" name="Biochem. Biophys. Res. Commun.">
        <title>Nuclear localized protein-1 (Nulp1) increases cell death of human osteosarcoma cells and binds the X-linked inhibitor of apoptosis protein.</title>
        <authorList>
            <person name="Steen H."/>
            <person name="Lindholm D."/>
        </authorList>
    </citation>
    <scope>FUNCTION</scope>
    <scope>SUBCELLULAR LOCATION</scope>
    <scope>INTERACTION WITH XIAP</scope>
</reference>
<reference key="6">
    <citation type="journal article" date="2010" name="Cell">
        <title>A tissue-specific atlas of mouse protein phosphorylation and expression.</title>
        <authorList>
            <person name="Huttlin E.L."/>
            <person name="Jedrychowski M.P."/>
            <person name="Elias J.E."/>
            <person name="Goswami T."/>
            <person name="Rad R."/>
            <person name="Beausoleil S.A."/>
            <person name="Villen J."/>
            <person name="Haas W."/>
            <person name="Sowa M.E."/>
            <person name="Gygi S.P."/>
        </authorList>
    </citation>
    <scope>IDENTIFICATION BY MASS SPECTROMETRY [LARGE SCALE ANALYSIS]</scope>
    <source>
        <tissue>Pancreas</tissue>
    </source>
</reference>
<reference key="7">
    <citation type="journal article" date="2020" name="J. Am. Heart Assoc.">
        <title>NULP1 Alleviates Cardiac Hypertrophy by Suppressing NFAT3 Transcriptional Activity.</title>
        <authorList>
            <person name="Zhang X."/>
            <person name="Lei F."/>
            <person name="Wang X.M."/>
            <person name="Deng K.Q."/>
            <person name="Ji Y.X."/>
            <person name="Zhang Y."/>
            <person name="Li H."/>
            <person name="Zhang X.D."/>
            <person name="Lu Z."/>
            <person name="Zhang P."/>
        </authorList>
    </citation>
    <scope>DISRUPTION PHENOTYPE</scope>
</reference>
<proteinExistence type="evidence at protein level"/>
<gene>
    <name type="primary">Tcf25</name>
    <name type="synonym">D8Ertd325e</name>
    <name evidence="7" type="synonym">Nulp1</name>
</gene>
<dbReference type="EMBL" id="U94988">
    <property type="protein sequence ID" value="AAG27133.1"/>
    <property type="molecule type" value="mRNA"/>
</dbReference>
<dbReference type="EMBL" id="AK013754">
    <property type="protein sequence ID" value="BAB28983.2"/>
    <property type="status" value="ALT_INIT"/>
    <property type="molecule type" value="mRNA"/>
</dbReference>
<dbReference type="EMBL" id="AK045397">
    <property type="protein sequence ID" value="BAC32344.1"/>
    <property type="status" value="ALT_FRAME"/>
    <property type="molecule type" value="mRNA"/>
</dbReference>
<dbReference type="EMBL" id="AK076151">
    <property type="protein sequence ID" value="BAC36220.1"/>
    <property type="status" value="ALT_INIT"/>
    <property type="molecule type" value="mRNA"/>
</dbReference>
<dbReference type="EMBL" id="AK088360">
    <property type="protein sequence ID" value="BAC40301.1"/>
    <property type="molecule type" value="mRNA"/>
</dbReference>
<dbReference type="EMBL" id="AK089964">
    <property type="protein sequence ID" value="BAC41018.1"/>
    <property type="molecule type" value="mRNA"/>
</dbReference>
<dbReference type="EMBL" id="AK148082">
    <property type="protein sequence ID" value="BAE28334.1"/>
    <property type="molecule type" value="mRNA"/>
</dbReference>
<dbReference type="EMBL" id="AK150232">
    <property type="protein sequence ID" value="BAE29397.1"/>
    <property type="molecule type" value="mRNA"/>
</dbReference>
<dbReference type="EMBL" id="AK150918">
    <property type="protein sequence ID" value="BAE29956.1"/>
    <property type="molecule type" value="mRNA"/>
</dbReference>
<dbReference type="EMBL" id="AK150942">
    <property type="protein sequence ID" value="BAE29977.1"/>
    <property type="molecule type" value="mRNA"/>
</dbReference>
<dbReference type="EMBL" id="AK151143">
    <property type="protein sequence ID" value="BAE30150.1"/>
    <property type="molecule type" value="mRNA"/>
</dbReference>
<dbReference type="EMBL" id="AK152178">
    <property type="protein sequence ID" value="BAE31009.1"/>
    <property type="molecule type" value="mRNA"/>
</dbReference>
<dbReference type="EMBL" id="AK152494">
    <property type="protein sequence ID" value="BAE31265.1"/>
    <property type="molecule type" value="mRNA"/>
</dbReference>
<dbReference type="EMBL" id="AK161627">
    <property type="protein sequence ID" value="BAE36500.1"/>
    <property type="molecule type" value="mRNA"/>
</dbReference>
<dbReference type="EMBL" id="AK167837">
    <property type="protein sequence ID" value="BAE39858.1"/>
    <property type="molecule type" value="mRNA"/>
</dbReference>
<dbReference type="EMBL" id="AK168167">
    <property type="protein sequence ID" value="BAE40128.1"/>
    <property type="molecule type" value="mRNA"/>
</dbReference>
<dbReference type="EMBL" id="BC025071">
    <property type="protein sequence ID" value="AAH25071.1"/>
    <property type="molecule type" value="mRNA"/>
</dbReference>
<dbReference type="EMBL" id="BC046768">
    <property type="protein sequence ID" value="AAH46768.2"/>
    <property type="molecule type" value="mRNA"/>
</dbReference>
<dbReference type="CCDS" id="CCDS22755.1">
    <molecule id="Q8R3L2-1"/>
</dbReference>
<dbReference type="CCDS" id="CCDS52700.1">
    <molecule id="Q8R3L2-5"/>
</dbReference>
<dbReference type="CCDS" id="CCDS85630.1">
    <molecule id="Q8R3L2-2"/>
</dbReference>
<dbReference type="CCDS" id="CCDS85631.1">
    <molecule id="Q8R3L2-4"/>
</dbReference>
<dbReference type="RefSeq" id="NP_001032966.1">
    <molecule id="Q8R3L2-5"/>
    <property type="nucleotide sequence ID" value="NM_001037877.4"/>
</dbReference>
<dbReference type="RefSeq" id="NP_001032967.1">
    <molecule id="Q8R3L2-1"/>
    <property type="nucleotide sequence ID" value="NM_001037878.5"/>
</dbReference>
<dbReference type="RefSeq" id="NP_001273291.1">
    <molecule id="Q8R3L2-4"/>
    <property type="nucleotide sequence ID" value="NM_001286362.2"/>
</dbReference>
<dbReference type="RefSeq" id="NP_080080.2">
    <molecule id="Q8R3L2-2"/>
    <property type="nucleotide sequence ID" value="NM_025804.3"/>
</dbReference>
<dbReference type="SMR" id="Q8R3L2"/>
<dbReference type="BioGRID" id="211765">
    <property type="interactions" value="12"/>
</dbReference>
<dbReference type="FunCoup" id="Q8R3L2">
    <property type="interactions" value="3802"/>
</dbReference>
<dbReference type="STRING" id="10090.ENSMUSP00000056485"/>
<dbReference type="GlyGen" id="Q8R3L2">
    <property type="glycosylation" value="1 site, 1 N-linked glycan (1 site)"/>
</dbReference>
<dbReference type="iPTMnet" id="Q8R3L2"/>
<dbReference type="PhosphoSitePlus" id="Q8R3L2"/>
<dbReference type="SwissPalm" id="Q8R3L2"/>
<dbReference type="PaxDb" id="10090-ENSMUSP00000056485"/>
<dbReference type="PeptideAtlas" id="Q8R3L2"/>
<dbReference type="ProteomicsDB" id="262965">
    <molecule id="Q8R3L2-1"/>
</dbReference>
<dbReference type="ProteomicsDB" id="262966">
    <molecule id="Q8R3L2-2"/>
</dbReference>
<dbReference type="ProteomicsDB" id="262967">
    <molecule id="Q8R3L2-3"/>
</dbReference>
<dbReference type="ProteomicsDB" id="262968">
    <molecule id="Q8R3L2-4"/>
</dbReference>
<dbReference type="ProteomicsDB" id="262969">
    <molecule id="Q8R3L2-5"/>
</dbReference>
<dbReference type="Pumba" id="Q8R3L2"/>
<dbReference type="Antibodypedia" id="30955">
    <property type="antibodies" value="204 antibodies from 27 providers"/>
</dbReference>
<dbReference type="Ensembl" id="ENSMUST00000057934.10">
    <molecule id="Q8R3L2-1"/>
    <property type="protein sequence ID" value="ENSMUSP00000056485.4"/>
    <property type="gene ID" value="ENSMUSG00000001472.18"/>
</dbReference>
<dbReference type="Ensembl" id="ENSMUST00000108840.4">
    <molecule id="Q8R3L2-5"/>
    <property type="protein sequence ID" value="ENSMUSP00000104468.3"/>
    <property type="gene ID" value="ENSMUSG00000001472.18"/>
</dbReference>
<dbReference type="Ensembl" id="ENSMUST00000212470.2">
    <molecule id="Q8R3L2-4"/>
    <property type="protein sequence ID" value="ENSMUSP00000148344.2"/>
    <property type="gene ID" value="ENSMUSG00000001472.18"/>
</dbReference>
<dbReference type="Ensembl" id="ENSMUST00000212571.2">
    <molecule id="Q8R3L2-2"/>
    <property type="protein sequence ID" value="ENSMUSP00000148531.2"/>
    <property type="gene ID" value="ENSMUSG00000001472.18"/>
</dbReference>
<dbReference type="GeneID" id="66855"/>
<dbReference type="KEGG" id="mmu:66855"/>
<dbReference type="UCSC" id="uc009nvl.2">
    <molecule id="Q8R3L2-1"/>
    <property type="organism name" value="mouse"/>
</dbReference>
<dbReference type="UCSC" id="uc009nvn.2">
    <molecule id="Q8R3L2-2"/>
    <property type="organism name" value="mouse"/>
</dbReference>
<dbReference type="UCSC" id="uc009nvo.2">
    <molecule id="Q8R3L2-4"/>
    <property type="organism name" value="mouse"/>
</dbReference>
<dbReference type="UCSC" id="uc009nvp.2">
    <molecule id="Q8R3L2-5"/>
    <property type="organism name" value="mouse"/>
</dbReference>
<dbReference type="AGR" id="MGI:1914105"/>
<dbReference type="CTD" id="22980"/>
<dbReference type="MGI" id="MGI:1914105">
    <property type="gene designation" value="Tcf25"/>
</dbReference>
<dbReference type="VEuPathDB" id="HostDB:ENSMUSG00000001472"/>
<dbReference type="eggNOG" id="KOG2422">
    <property type="taxonomic scope" value="Eukaryota"/>
</dbReference>
<dbReference type="GeneTree" id="ENSGT00390000005563"/>
<dbReference type="HOGENOM" id="CLU_008321_3_2_1"/>
<dbReference type="InParanoid" id="Q8R3L2"/>
<dbReference type="OMA" id="IWGKMPP"/>
<dbReference type="OrthoDB" id="205993at2759"/>
<dbReference type="PhylomeDB" id="Q8R3L2"/>
<dbReference type="TreeFam" id="TF106155"/>
<dbReference type="BioGRID-ORCS" id="66855">
    <property type="hits" value="1 hit in 79 CRISPR screens"/>
</dbReference>
<dbReference type="ChiTaRS" id="Tcf25">
    <property type="organism name" value="mouse"/>
</dbReference>
<dbReference type="PRO" id="PR:Q8R3L2"/>
<dbReference type="Proteomes" id="UP000000589">
    <property type="component" value="Chromosome 8"/>
</dbReference>
<dbReference type="RNAct" id="Q8R3L2">
    <property type="molecule type" value="protein"/>
</dbReference>
<dbReference type="Bgee" id="ENSMUSG00000001472">
    <property type="expression patterns" value="Expressed in pontine nuclear group and 303 other cell types or tissues"/>
</dbReference>
<dbReference type="ExpressionAtlas" id="Q8R3L2">
    <property type="expression patterns" value="baseline and differential"/>
</dbReference>
<dbReference type="GO" id="GO:0005829">
    <property type="term" value="C:cytosol"/>
    <property type="evidence" value="ECO:0007669"/>
    <property type="project" value="UniProtKB-SubCell"/>
</dbReference>
<dbReference type="GO" id="GO:0005634">
    <property type="term" value="C:nucleus"/>
    <property type="evidence" value="ECO:0000314"/>
    <property type="project" value="MGI"/>
</dbReference>
<dbReference type="GO" id="GO:1990112">
    <property type="term" value="C:RQC complex"/>
    <property type="evidence" value="ECO:0000250"/>
    <property type="project" value="UniProtKB"/>
</dbReference>
<dbReference type="GO" id="GO:0003677">
    <property type="term" value="F:DNA binding"/>
    <property type="evidence" value="ECO:0007669"/>
    <property type="project" value="UniProtKB-KW"/>
</dbReference>
<dbReference type="GO" id="GO:0061945">
    <property type="term" value="P:regulation of protein K48-linked ubiquitination"/>
    <property type="evidence" value="ECO:0000250"/>
    <property type="project" value="UniProtKB"/>
</dbReference>
<dbReference type="GO" id="GO:0072344">
    <property type="term" value="P:rescue of stalled ribosome"/>
    <property type="evidence" value="ECO:0000250"/>
    <property type="project" value="UniProtKB"/>
</dbReference>
<dbReference type="Gene3D" id="1.25.40.10">
    <property type="entry name" value="Tetratricopeptide repeat domain"/>
    <property type="match status" value="1"/>
</dbReference>
<dbReference type="InterPro" id="IPR006994">
    <property type="entry name" value="TCF25/Rqc1"/>
</dbReference>
<dbReference type="InterPro" id="IPR011990">
    <property type="entry name" value="TPR-like_helical_dom_sf"/>
</dbReference>
<dbReference type="PANTHER" id="PTHR22684">
    <property type="entry name" value="NULP1-RELATED"/>
    <property type="match status" value="1"/>
</dbReference>
<dbReference type="PANTHER" id="PTHR22684:SF0">
    <property type="entry name" value="RIBOSOME QUALITY CONTROL COMPLEX SUBUNIT TCF25"/>
    <property type="match status" value="1"/>
</dbReference>
<dbReference type="Pfam" id="PF04910">
    <property type="entry name" value="Tcf25"/>
    <property type="match status" value="1"/>
</dbReference>
<accession>Q8R3L2</accession>
<accession>Q3THR8</accession>
<accession>Q3UBI7</accession>
<accession>Q3UD64</accession>
<accession>Q3UG75</accession>
<accession>Q80ZX3</accession>
<accession>Q8BR80</accession>
<accession>Q8C200</accession>
<accession>Q8C2M3</accession>
<accession>Q8C6B4</accession>
<accession>Q9CUW0</accession>
<accession>Q9ER19</accession>
<comment type="function">
    <text evidence="1 2 5">Component of the ribosome quality control complex (RQC), a ribosome-associated complex that mediates ubiquitination and extraction of incompletely synthesized nascent chains for proteasomal degradation (By similarity). In the RQC complex, required to promote formation of 'Lys-48'-linked polyubiquitin chains during ubiquitination of incompletely synthesized proteins by LTN1 (By similarity). May negatively regulate the calcineurin-NFAT signaling cascade by suppressing the activity of transcription factor NFATC4 (By similarity). May play a role in cell death control (PubMed:18068114).</text>
</comment>
<comment type="subunit">
    <text evidence="1 2 5">Component of the ribosome quality control complex (RQC), composed of the E3 ubiquitin ligase LTN1, TCF25 and NEMF associated with the 60S ribosomal subunit (By similarity). Interacts (via C-terminus) with NFATC4; the interaction leads to suppresson of NFATC4 transcription factor activity and is reduced following stimulation with angiotensin-2 (By similarity). Interacts with XIAP (PubMed:18068114).</text>
</comment>
<comment type="subcellular location">
    <subcellularLocation>
        <location evidence="4 5">Nucleus</location>
    </subcellularLocation>
    <subcellularLocation>
        <location evidence="2">Cytoplasm</location>
        <location evidence="2">Cytosol</location>
    </subcellularLocation>
    <text evidence="2">Mainly nuclear.</text>
</comment>
<comment type="alternative products">
    <event type="alternative splicing"/>
    <isoform>
        <id>Q8R3L2-1</id>
        <name>1</name>
        <sequence type="displayed"/>
    </isoform>
    <isoform>
        <id>Q8R3L2-2</id>
        <name>2</name>
        <sequence type="described" ref="VSP_020026 VSP_020027"/>
    </isoform>
    <isoform>
        <id>Q8R3L2-3</id>
        <name>3</name>
        <sequence type="described" ref="VSP_020023 VSP_020025 VSP_020028"/>
    </isoform>
    <isoform>
        <id>Q8R3L2-4</id>
        <name>4</name>
        <sequence type="described" ref="VSP_020024 VSP_020026 VSP_020027"/>
    </isoform>
    <isoform>
        <id>Q8R3L2-5</id>
        <name>5</name>
        <sequence type="described" ref="VSP_020025 VSP_020028"/>
    </isoform>
</comment>
<comment type="tissue specificity">
    <text evidence="4">Broadly expressed in the embryo during the early stages of organogenesis with highest levels in dorsal root ganglia and little or no expression in liver and skin.</text>
</comment>
<comment type="disruption phenotype">
    <text evidence="6">Knockout does not lead to differences in heart size under standard conditions, however in a mouse model of cardiac hypertrophy induced by pressure overload following aortic banding surgery, heart size is increased.</text>
</comment>
<comment type="similarity">
    <text evidence="10">Belongs to the TCF25 family.</text>
</comment>
<comment type="sequence caution" evidence="10">
    <conflict type="erroneous initiation">
        <sequence resource="EMBL-CDS" id="BAB28983"/>
    </conflict>
</comment>
<comment type="sequence caution" evidence="10">
    <conflict type="frameshift">
        <sequence resource="EMBL-CDS" id="BAC32344"/>
    </conflict>
</comment>
<comment type="sequence caution" evidence="10">
    <conflict type="erroneous initiation">
        <sequence resource="EMBL-CDS" id="BAC36220"/>
    </conflict>
</comment>
<organism>
    <name type="scientific">Mus musculus</name>
    <name type="common">Mouse</name>
    <dbReference type="NCBI Taxonomy" id="10090"/>
    <lineage>
        <taxon>Eukaryota</taxon>
        <taxon>Metazoa</taxon>
        <taxon>Chordata</taxon>
        <taxon>Craniata</taxon>
        <taxon>Vertebrata</taxon>
        <taxon>Euteleostomi</taxon>
        <taxon>Mammalia</taxon>
        <taxon>Eutheria</taxon>
        <taxon>Euarchontoglires</taxon>
        <taxon>Glires</taxon>
        <taxon>Rodentia</taxon>
        <taxon>Myomorpha</taxon>
        <taxon>Muroidea</taxon>
        <taxon>Muridae</taxon>
        <taxon>Murinae</taxon>
        <taxon>Mus</taxon>
        <taxon>Mus</taxon>
    </lineage>
</organism>
<sequence>MSRRALRRLRGEQRGQEPLGPDALKFVLLDDDDAEEEGPKPGLGGRRPGGAGKEGVRVNNRFELINTEDLEDDLVVNGERSDCTLPDSVSSGNKGRAKHGNAETKQDGGATKAGSSEQSNASGKLRKKKKKQKNKKSCTGESSENGLEDIDRILERIEDSSGFSHPGPPPLSSRKHVLYVEHRHLNPDTELKRYFGARAVLGEQRPRQRQRVYPKCTWLTTPKSTWPRYSKPGLSMRLLESKKGLSFFAFDHNEEYQQAQHKFLVAVESMEPNNIVVLLQTSPYHVDSLLQLSDACRFQEDQEMARDLIERALYSMECAFHPLFSLTSGTCRLDYRRPENRSFYLTLYKQMSFLEKRGCPRTALEYCKLILSLEPDEDPLCMLLLIDHLALRARNYEYLIRLFQEWEAHRNLSQLPNFAFSVPLAYFLLSQQTDLPEHELSSARQQASLLIQQALTMFPGVLMPLLEYCSVRPDATVSNHRFFGPDAEISQPPALGQLVSLYLGRSHFLWKEPAIMSWLEENVHEVLQAVDAGDPAVEACENRRKVLYQRAPRNIHRHVILSEIKEAVAALPSDVTTQSVMGFDPLPPLDTIYSYVRPERLSPVSHGNTIALFFRSLLPNYTTEGERLEEGVAGGPNRNQGLNRLMLAVRDMMANFHFNDLEVPREDNPEGEGDWD</sequence>
<feature type="chain" id="PRO_0000087266" description="Ribosome quality control complex subunit TCF25">
    <location>
        <begin position="1"/>
        <end position="676"/>
    </location>
</feature>
<feature type="region of interest" description="Disordered" evidence="3">
    <location>
        <begin position="1"/>
        <end position="145"/>
    </location>
</feature>
<feature type="compositionally biased region" description="Gly residues" evidence="3">
    <location>
        <begin position="41"/>
        <end position="53"/>
    </location>
</feature>
<feature type="compositionally biased region" description="Polar residues" evidence="3">
    <location>
        <begin position="113"/>
        <end position="122"/>
    </location>
</feature>
<feature type="compositionally biased region" description="Basic residues" evidence="3">
    <location>
        <begin position="124"/>
        <end position="136"/>
    </location>
</feature>
<feature type="modified residue" description="Phosphoserine" evidence="2">
    <location>
        <position position="602"/>
    </location>
</feature>
<feature type="splice variant" id="VSP_020023" description="In isoform 3." evidence="9">
    <location>
        <begin position="54"/>
        <end position="68"/>
    </location>
</feature>
<feature type="splice variant" id="VSP_020024" description="In isoform 4." evidence="9">
    <location>
        <begin position="119"/>
        <end position="143"/>
    </location>
</feature>
<feature type="splice variant" id="VSP_020025" description="In isoform 3 and isoform 5." evidence="9">
    <original>GE</original>
    <variation>QL</variation>
    <location>
        <begin position="625"/>
        <end position="626"/>
    </location>
</feature>
<feature type="splice variant" id="VSP_020026" description="In isoform 2 and isoform 4." evidence="7 8 9">
    <original>G</original>
    <variation>L</variation>
    <location>
        <position position="625"/>
    </location>
</feature>
<feature type="splice variant" id="VSP_020027" description="In isoform 2 and isoform 4." evidence="7 8 9">
    <location>
        <begin position="626"/>
        <end position="676"/>
    </location>
</feature>
<feature type="splice variant" id="VSP_020028" description="In isoform 3 and isoform 5." evidence="9">
    <location>
        <begin position="627"/>
        <end position="676"/>
    </location>
</feature>
<feature type="sequence conflict" description="In Ref. 2; BAE29956/BAE29977/BAE30150/BAE31009/BAE31265." evidence="10" ref="2">
    <original>K</original>
    <variation>E</variation>
    <location>
        <position position="129"/>
    </location>
</feature>
<feature type="sequence conflict" description="In Ref. 1; AAG27133." evidence="10" ref="1">
    <original>H</original>
    <variation>L</variation>
    <location>
        <position position="176"/>
    </location>
</feature>
<feature type="sequence conflict" description="In Ref. 1; AAG27133." evidence="10" ref="1">
    <original>Q</original>
    <variation>E</variation>
    <location>
        <position position="204"/>
    </location>
</feature>
<feature type="sequence conflict" description="In Ref. 2; BAE39858/BAE40128." evidence="10" ref="2">
    <original>L</original>
    <variation>R</variation>
    <location>
        <position position="219"/>
    </location>
</feature>
<feature type="sequence conflict" description="In Ref. 2; BAE28334." evidence="10" ref="2">
    <original>K</original>
    <variation>E</variation>
    <location>
        <position position="243"/>
    </location>
</feature>
<feature type="sequence conflict" description="In Ref. 1; AAG27133." evidence="10" ref="1">
    <original>I</original>
    <variation>T</variation>
    <location>
        <position position="370"/>
    </location>
</feature>
<feature type="sequence conflict" description="In Ref. 1; AAG27133." evidence="10" ref="1">
    <original>E</original>
    <variation>V</variation>
    <location>
        <position position="407"/>
    </location>
</feature>
<feature type="sequence conflict" description="In Ref. 1; AAG27133." evidence="10" ref="1">
    <original>A</original>
    <variation>T</variation>
    <location>
        <position position="454"/>
    </location>
</feature>
<feature type="sequence conflict" description="In Ref. 2; BAE28334 and 3; AAH25071." evidence="10" ref="2 3">
    <original>A</original>
    <variation>V</variation>
    <location>
        <position position="539"/>
    </location>
</feature>
<feature type="sequence conflict" description="In Ref. 1; AAG27133." evidence="10" ref="1">
    <original>I</original>
    <variation>M</variation>
    <location>
        <position position="560"/>
    </location>
</feature>
<feature type="sequence conflict" description="In Ref. 2; BAE39858/BAE40128." evidence="10" ref="2">
    <original>R</original>
    <variation>G</variation>
    <location>
        <position position="597"/>
    </location>
</feature>
<evidence type="ECO:0000250" key="1">
    <source>
        <dbReference type="UniProtKB" id="A0A8I6ASZ5"/>
    </source>
</evidence>
<evidence type="ECO:0000250" key="2">
    <source>
        <dbReference type="UniProtKB" id="Q9BQ70"/>
    </source>
</evidence>
<evidence type="ECO:0000256" key="3">
    <source>
        <dbReference type="SAM" id="MobiDB-lite"/>
    </source>
</evidence>
<evidence type="ECO:0000269" key="4">
    <source>
    </source>
</evidence>
<evidence type="ECO:0000269" key="5">
    <source>
    </source>
</evidence>
<evidence type="ECO:0000269" key="6">
    <source>
    </source>
</evidence>
<evidence type="ECO:0000303" key="7">
    <source>
    </source>
</evidence>
<evidence type="ECO:0000303" key="8">
    <source>
    </source>
</evidence>
<evidence type="ECO:0000303" key="9">
    <source>
    </source>
</evidence>
<evidence type="ECO:0000305" key="10"/>
<protein>
    <recommendedName>
        <fullName evidence="10">Ribosome quality control complex subunit TCF25</fullName>
    </recommendedName>
    <alternativeName>
        <fullName evidence="7">Nuclear localized protein 1</fullName>
    </alternativeName>
    <alternativeName>
        <fullName>Transcription factor 25</fullName>
        <shortName>TCF-25</shortName>
    </alternativeName>
</protein>
<name>TCF25_MOUSE</name>
<keyword id="KW-0025">Alternative splicing</keyword>
<keyword id="KW-0963">Cytoplasm</keyword>
<keyword id="KW-0539">Nucleus</keyword>
<keyword id="KW-0597">Phosphoprotein</keyword>
<keyword id="KW-1185">Reference proteome</keyword>
<keyword id="KW-0678">Repressor</keyword>
<keyword id="KW-0804">Transcription</keyword>
<keyword id="KW-0805">Transcription regulation</keyword>